<protein>
    <recommendedName>
        <fullName evidence="1">Digeranylgeranylglycerophospholipid reductase 2</fullName>
        <shortName evidence="1">DGGGPL reductase 2</shortName>
        <ecNumber evidence="1">1.3.-.-</ecNumber>
    </recommendedName>
    <alternativeName>
        <fullName evidence="1">2,3-bis-O-geranylgeranylglyceryl phosphate reductase 2</fullName>
    </alternativeName>
    <alternativeName>
        <fullName evidence="1">Geranylgeranyl reductase 2</fullName>
        <shortName evidence="1">GGR 2</shortName>
    </alternativeName>
</protein>
<evidence type="ECO:0000255" key="1">
    <source>
        <dbReference type="HAMAP-Rule" id="MF_01287"/>
    </source>
</evidence>
<evidence type="ECO:0000305" key="2"/>
<proteinExistence type="inferred from homology"/>
<reference key="1">
    <citation type="journal article" date="2002" name="Proc. Natl. Acad. Sci. U.S.A.">
        <title>The complete genome of hyperthermophile Methanopyrus kandleri AV19 and monophyly of archaeal methanogens.</title>
        <authorList>
            <person name="Slesarev A.I."/>
            <person name="Mezhevaya K.V."/>
            <person name="Makarova K.S."/>
            <person name="Polushin N.N."/>
            <person name="Shcherbinina O.V."/>
            <person name="Shakhova V.V."/>
            <person name="Belova G.I."/>
            <person name="Aravind L."/>
            <person name="Natale D.A."/>
            <person name="Rogozin I.B."/>
            <person name="Tatusov R.L."/>
            <person name="Wolf Y.I."/>
            <person name="Stetter K.O."/>
            <person name="Malykh A.G."/>
            <person name="Koonin E.V."/>
            <person name="Kozyavkin S.A."/>
        </authorList>
    </citation>
    <scope>NUCLEOTIDE SEQUENCE [LARGE SCALE GENOMIC DNA]</scope>
    <source>
        <strain>AV19 / DSM 6324 / JCM 9639 / NBRC 100938</strain>
    </source>
</reference>
<comment type="function">
    <text evidence="1">Is involved in the reduction of 2,3-digeranylgeranylglycerophospholipids (unsaturated archaeols) into 2,3-diphytanylglycerophospholipids (saturated archaeols) in the biosynthesis of archaeal membrane lipids. Catalyzes the formation of archaetidic acid (2,3-di-O-phytanyl-sn-glyceryl phosphate) from 2,3-di-O-geranylgeranylglyceryl phosphate (DGGGP) via the hydrogenation of each double bond of the isoprenoid chains. Is also probably able to reduce double bonds of geranyl groups in CDP-2,3-bis-O-(geranylgeranyl)-sn-glycerol and archaetidylserine, thus acting at various stages in the biosynthesis of archaeal membrane lipids.</text>
</comment>
<comment type="catalytic activity">
    <reaction evidence="1">
        <text>a 2,3-bis-O-phytanyl-sn-glycerol 1-phospholipid + 8 A = a 2,3-bis-O-(geranylgeranyl)-sn-glycerol 1-phospholipid + 8 AH2</text>
        <dbReference type="Rhea" id="RHEA:64376"/>
        <dbReference type="ChEBI" id="CHEBI:13193"/>
        <dbReference type="ChEBI" id="CHEBI:17499"/>
        <dbReference type="ChEBI" id="CHEBI:138139"/>
        <dbReference type="ChEBI" id="CHEBI:138140"/>
    </reaction>
    <physiologicalReaction direction="right-to-left" evidence="1">
        <dbReference type="Rhea" id="RHEA:64378"/>
    </physiologicalReaction>
</comment>
<comment type="catalytic activity">
    <reaction evidence="1">
        <text>2,3-bis-O-(phytanyl)-sn-glycerol 1-phosphate + 8 A = 2,3-bis-O-(geranylgeranyl)-sn-glycerol 1-phosphate + 8 AH2</text>
        <dbReference type="Rhea" id="RHEA:64368"/>
        <dbReference type="ChEBI" id="CHEBI:13193"/>
        <dbReference type="ChEBI" id="CHEBI:17499"/>
        <dbReference type="ChEBI" id="CHEBI:58837"/>
        <dbReference type="ChEBI" id="CHEBI:73125"/>
    </reaction>
    <physiologicalReaction direction="right-to-left" evidence="1">
        <dbReference type="Rhea" id="RHEA:64370"/>
    </physiologicalReaction>
</comment>
<comment type="catalytic activity">
    <reaction evidence="1">
        <text>CDP-2,3-bis-O-(geranylgeranyl)-sn-glycerol + 8 AH2 = CDP-2,3-bis-O-(phytanyl)-sn-glycerol + 8 A</text>
        <dbReference type="Rhea" id="RHEA:84207"/>
        <dbReference type="ChEBI" id="CHEBI:13193"/>
        <dbReference type="ChEBI" id="CHEBI:17499"/>
        <dbReference type="ChEBI" id="CHEBI:58838"/>
        <dbReference type="ChEBI" id="CHEBI:74004"/>
    </reaction>
    <physiologicalReaction direction="left-to-right" evidence="1">
        <dbReference type="Rhea" id="RHEA:84208"/>
    </physiologicalReaction>
</comment>
<comment type="catalytic activity">
    <reaction evidence="1">
        <text>archaetidylserine + 8 AH2 = 2,3-bis-O-phytanyl-sn-glycero-3-phospho-L-serine + 8 A</text>
        <dbReference type="Rhea" id="RHEA:84215"/>
        <dbReference type="ChEBI" id="CHEBI:13193"/>
        <dbReference type="ChEBI" id="CHEBI:17499"/>
        <dbReference type="ChEBI" id="CHEBI:71517"/>
        <dbReference type="ChEBI" id="CHEBI:74853"/>
    </reaction>
    <physiologicalReaction direction="left-to-right" evidence="1">
        <dbReference type="Rhea" id="RHEA:84216"/>
    </physiologicalReaction>
</comment>
<comment type="cofactor">
    <cofactor evidence="1">
        <name>FAD</name>
        <dbReference type="ChEBI" id="CHEBI:57692"/>
    </cofactor>
    <text evidence="1">Binds 1 FAD per subunit.</text>
</comment>
<comment type="pathway">
    <text evidence="1">Membrane lipid metabolism; glycerophospholipid metabolism.</text>
</comment>
<comment type="miscellaneous">
    <text evidence="1">Reduction reaction proceeds via syn addition of hydrogen for double bonds.</text>
</comment>
<comment type="similarity">
    <text evidence="1">Belongs to the geranylgeranyl reductase family. DGGGPL reductase subfamily.</text>
</comment>
<comment type="sequence caution" evidence="2">
    <conflict type="erroneous initiation">
        <sequence resource="EMBL-CDS" id="AAM02858"/>
    </conflict>
    <text>Extended N-terminus.</text>
</comment>
<organism>
    <name type="scientific">Methanopyrus kandleri (strain AV19 / DSM 6324 / JCM 9639 / NBRC 100938)</name>
    <dbReference type="NCBI Taxonomy" id="190192"/>
    <lineage>
        <taxon>Archaea</taxon>
        <taxon>Methanobacteriati</taxon>
        <taxon>Methanobacteriota</taxon>
        <taxon>Methanomada group</taxon>
        <taxon>Methanopyri</taxon>
        <taxon>Methanopyrales</taxon>
        <taxon>Methanopyraceae</taxon>
        <taxon>Methanopyrus</taxon>
    </lineage>
</organism>
<keyword id="KW-0274">FAD</keyword>
<keyword id="KW-0285">Flavoprotein</keyword>
<keyword id="KW-0444">Lipid biosynthesis</keyword>
<keyword id="KW-0443">Lipid metabolism</keyword>
<keyword id="KW-0560">Oxidoreductase</keyword>
<keyword id="KW-0594">Phospholipid biosynthesis</keyword>
<keyword id="KW-1208">Phospholipid metabolism</keyword>
<keyword id="KW-1185">Reference proteome</keyword>
<name>GGR2_METKA</name>
<gene>
    <name type="ordered locus">MK1645</name>
</gene>
<feature type="chain" id="PRO_0000351459" description="Digeranylgeranylglycerophospholipid reductase 2">
    <location>
        <begin position="1"/>
        <end position="396"/>
    </location>
</feature>
<feature type="binding site" evidence="1">
    <location>
        <position position="13"/>
    </location>
    <ligand>
        <name>FAD</name>
        <dbReference type="ChEBI" id="CHEBI:57692"/>
    </ligand>
</feature>
<feature type="binding site" evidence="1">
    <location>
        <position position="32"/>
    </location>
    <ligand>
        <name>FAD</name>
        <dbReference type="ChEBI" id="CHEBI:57692"/>
    </ligand>
</feature>
<feature type="binding site" evidence="1">
    <location>
        <position position="43"/>
    </location>
    <ligand>
        <name>FAD</name>
        <dbReference type="ChEBI" id="CHEBI:57692"/>
    </ligand>
</feature>
<feature type="binding site" evidence="1">
    <location>
        <position position="44"/>
    </location>
    <ligand>
        <name>FAD</name>
        <dbReference type="ChEBI" id="CHEBI:57692"/>
    </ligand>
</feature>
<feature type="binding site" evidence="1">
    <location>
        <position position="46"/>
    </location>
    <ligand>
        <name>FAD</name>
        <dbReference type="ChEBI" id="CHEBI:57692"/>
    </ligand>
</feature>
<feature type="binding site" evidence="1">
    <location>
        <position position="92"/>
    </location>
    <ligand>
        <name>FAD</name>
        <dbReference type="ChEBI" id="CHEBI:57692"/>
    </ligand>
</feature>
<feature type="binding site" evidence="1">
    <location>
        <position position="116"/>
    </location>
    <ligand>
        <name>FAD</name>
        <dbReference type="ChEBI" id="CHEBI:57692"/>
    </ligand>
</feature>
<feature type="binding site" evidence="1">
    <location>
        <position position="278"/>
    </location>
    <ligand>
        <name>FAD</name>
        <dbReference type="ChEBI" id="CHEBI:57692"/>
    </ligand>
</feature>
<feature type="binding site" evidence="1">
    <location>
        <position position="290"/>
    </location>
    <ligand>
        <name>FAD</name>
        <dbReference type="ChEBI" id="CHEBI:57692"/>
    </ligand>
</feature>
<feature type="binding site" evidence="1">
    <location>
        <position position="291"/>
    </location>
    <ligand>
        <name>FAD</name>
        <dbReference type="ChEBI" id="CHEBI:57692"/>
    </ligand>
</feature>
<accession>Q8TUV8</accession>
<dbReference type="EC" id="1.3.-.-" evidence="1"/>
<dbReference type="EMBL" id="AE009439">
    <property type="protein sequence ID" value="AAM02858.1"/>
    <property type="status" value="ALT_INIT"/>
    <property type="molecule type" value="Genomic_DNA"/>
</dbReference>
<dbReference type="RefSeq" id="WP_148679871.1">
    <property type="nucleotide sequence ID" value="NC_003551.1"/>
</dbReference>
<dbReference type="SMR" id="Q8TUV8"/>
<dbReference type="FunCoup" id="Q8TUV8">
    <property type="interactions" value="53"/>
</dbReference>
<dbReference type="STRING" id="190192.MK1645"/>
<dbReference type="PaxDb" id="190192-MK1645"/>
<dbReference type="EnsemblBacteria" id="AAM02858">
    <property type="protein sequence ID" value="AAM02858"/>
    <property type="gene ID" value="MK1645"/>
</dbReference>
<dbReference type="GeneID" id="1478240"/>
<dbReference type="KEGG" id="mka:MK1645"/>
<dbReference type="PATRIC" id="fig|190192.8.peg.1807"/>
<dbReference type="HOGENOM" id="CLU_024648_0_0_2"/>
<dbReference type="InParanoid" id="Q8TUV8"/>
<dbReference type="OrthoDB" id="6062at2157"/>
<dbReference type="UniPathway" id="UPA00940"/>
<dbReference type="Proteomes" id="UP000001826">
    <property type="component" value="Chromosome"/>
</dbReference>
<dbReference type="GO" id="GO:0016020">
    <property type="term" value="C:membrane"/>
    <property type="evidence" value="ECO:0007669"/>
    <property type="project" value="GOC"/>
</dbReference>
<dbReference type="GO" id="GO:0050660">
    <property type="term" value="F:flavin adenine dinucleotide binding"/>
    <property type="evidence" value="ECO:0007669"/>
    <property type="project" value="UniProtKB-UniRule"/>
</dbReference>
<dbReference type="GO" id="GO:0045550">
    <property type="term" value="F:geranylgeranyl reductase activity"/>
    <property type="evidence" value="ECO:0007669"/>
    <property type="project" value="InterPro"/>
</dbReference>
<dbReference type="GO" id="GO:0016628">
    <property type="term" value="F:oxidoreductase activity, acting on the CH-CH group of donors, NAD or NADP as acceptor"/>
    <property type="evidence" value="ECO:0007669"/>
    <property type="project" value="InterPro"/>
</dbReference>
<dbReference type="GO" id="GO:0046474">
    <property type="term" value="P:glycerophospholipid biosynthetic process"/>
    <property type="evidence" value="ECO:0007669"/>
    <property type="project" value="UniProtKB-UniRule"/>
</dbReference>
<dbReference type="GO" id="GO:0046467">
    <property type="term" value="P:membrane lipid biosynthetic process"/>
    <property type="evidence" value="ECO:0007669"/>
    <property type="project" value="InterPro"/>
</dbReference>
<dbReference type="Gene3D" id="3.30.9.10">
    <property type="entry name" value="D-Amino Acid Oxidase, subunit A, domain 2"/>
    <property type="match status" value="1"/>
</dbReference>
<dbReference type="Gene3D" id="3.50.50.60">
    <property type="entry name" value="FAD/NAD(P)-binding domain"/>
    <property type="match status" value="1"/>
</dbReference>
<dbReference type="HAMAP" id="MF_01287">
    <property type="entry name" value="DGGGPL_reductase"/>
    <property type="match status" value="1"/>
</dbReference>
<dbReference type="InterPro" id="IPR023590">
    <property type="entry name" value="DGGGPL_reductase"/>
</dbReference>
<dbReference type="InterPro" id="IPR036188">
    <property type="entry name" value="FAD/NAD-bd_sf"/>
</dbReference>
<dbReference type="InterPro" id="IPR011777">
    <property type="entry name" value="Geranylgeranyl_Rdtase_fam"/>
</dbReference>
<dbReference type="InterPro" id="IPR050407">
    <property type="entry name" value="Geranylgeranyl_reductase"/>
</dbReference>
<dbReference type="InterPro" id="IPR054715">
    <property type="entry name" value="GGR_cat"/>
</dbReference>
<dbReference type="NCBIfam" id="TIGR02032">
    <property type="entry name" value="GG-red-SF"/>
    <property type="match status" value="1"/>
</dbReference>
<dbReference type="PANTHER" id="PTHR42685:SF18">
    <property type="entry name" value="DIGERANYLGERANYLGLYCEROPHOSPHOLIPID REDUCTASE"/>
    <property type="match status" value="1"/>
</dbReference>
<dbReference type="PANTHER" id="PTHR42685">
    <property type="entry name" value="GERANYLGERANYL DIPHOSPHATE REDUCTASE"/>
    <property type="match status" value="1"/>
</dbReference>
<dbReference type="Pfam" id="PF12831">
    <property type="entry name" value="FAD_oxidored"/>
    <property type="match status" value="1"/>
</dbReference>
<dbReference type="Pfam" id="PF22578">
    <property type="entry name" value="GGR_cat"/>
    <property type="match status" value="1"/>
</dbReference>
<dbReference type="PRINTS" id="PR00420">
    <property type="entry name" value="RNGMNOXGNASE"/>
</dbReference>
<dbReference type="SUPFAM" id="SSF51905">
    <property type="entry name" value="FAD/NAD(P)-binding domain"/>
    <property type="match status" value="1"/>
</dbReference>
<sequence>MEFDVVVVGAGPAGSVAAWAAAEAGCDVLILERKAEIGVPKQCAEGISAHGLEHAGIEPQDEWIATEISRALIYAPNGKEFEVPGDGYVLERRVFDKWLVVRAVEAGAEVELLAHARRALLDEGRVVGVEYEGEDGVHEVRARIVIAADGIESRIGRTAGLVPSLKPVEMCTCAQYEMVGVDVEEDATHFFVDAEFFPGGYFWIFPKGEGRANVGLGIRGSESEPGDALKVLNRALEDHELISEAVADAVPVEVNVGGVPVCGPVERTYGDGILLVGDAARQVNPLTGGGLHTSLVCGRIAGEVAAEAIEEDDTSASFLKRYQDRWEEEFGKTFKYALKASKIFSEMSNEELNALAEALDREDILRLVKGEEVVKVAKKVISRKPSLLKYAKHLMK</sequence>